<reference key="1">
    <citation type="journal article" date="2014" name="Nat. Commun.">
        <title>The tobacco genome sequence and its comparison with those of tomato and potato.</title>
        <authorList>
            <person name="Sierro N."/>
            <person name="Battey J.N."/>
            <person name="Ouadi S."/>
            <person name="Bakaher N."/>
            <person name="Bovet L."/>
            <person name="Willig A."/>
            <person name="Goepfert S."/>
            <person name="Peitsch M.C."/>
            <person name="Ivanov N.V."/>
        </authorList>
    </citation>
    <scope>NUCLEOTIDE SEQUENCE [LARGE SCALE GENOMIC DNA]</scope>
    <source>
        <strain>cv. TN90</strain>
    </source>
</reference>
<reference key="2">
    <citation type="journal article" date="2020" name="Planta">
        <title>Genetic attenuation of alkaloids and nicotine content in tobacco (Nicotiana tabacum).</title>
        <authorList>
            <person name="Hidalgo Martinez D."/>
            <person name="Payyavula R.S."/>
            <person name="Kudithipudi C."/>
            <person name="Shen Y."/>
            <person name="Xu D."/>
            <person name="Warek U."/>
            <person name="Strickland J.A."/>
            <person name="Melis A."/>
        </authorList>
    </citation>
    <scope>FUNCTION</scope>
    <scope>DISRUPTION PHENOTYPE</scope>
    <scope>PATHWAY</scope>
    <source>
        <strain>cv. K326-ALCS3</strain>
    </source>
</reference>
<protein>
    <recommendedName>
        <fullName evidence="8">Arginine decarboxylase 1B, chloroplastic</fullName>
        <ecNumber evidence="5">4.1.1.19</ecNumber>
    </recommendedName>
</protein>
<dbReference type="EC" id="4.1.1.19" evidence="5"/>
<dbReference type="RefSeq" id="XP_016432787.1">
    <property type="nucleotide sequence ID" value="XM_016577301.1"/>
</dbReference>
<dbReference type="SMR" id="A0A1S3WYR7"/>
<dbReference type="STRING" id="4097.A0A1S3WYR7"/>
<dbReference type="PaxDb" id="4097-A0A1S3WYR7"/>
<dbReference type="GeneID" id="107759371"/>
<dbReference type="KEGG" id="nta:107759371"/>
<dbReference type="OMA" id="AVEYTQH"/>
<dbReference type="OrthoDB" id="3717802at2759"/>
<dbReference type="UniPathway" id="UPA00107"/>
<dbReference type="UniPathway" id="UPA00186">
    <property type="reaction ID" value="UER00284"/>
</dbReference>
<dbReference type="Proteomes" id="UP000084051">
    <property type="component" value="Unplaced"/>
</dbReference>
<dbReference type="GO" id="GO:0009507">
    <property type="term" value="C:chloroplast"/>
    <property type="evidence" value="ECO:0007669"/>
    <property type="project" value="UniProtKB-SubCell"/>
</dbReference>
<dbReference type="GO" id="GO:0008792">
    <property type="term" value="F:arginine decarboxylase activity"/>
    <property type="evidence" value="ECO:0000318"/>
    <property type="project" value="GO_Central"/>
</dbReference>
<dbReference type="GO" id="GO:0009820">
    <property type="term" value="P:alkaloid metabolic process"/>
    <property type="evidence" value="ECO:0007669"/>
    <property type="project" value="UniProtKB-KW"/>
</dbReference>
<dbReference type="GO" id="GO:0006527">
    <property type="term" value="P:arginine catabolic process"/>
    <property type="evidence" value="ECO:0007669"/>
    <property type="project" value="InterPro"/>
</dbReference>
<dbReference type="GO" id="GO:0042179">
    <property type="term" value="P:nicotine biosynthetic process"/>
    <property type="evidence" value="ECO:0007669"/>
    <property type="project" value="UniProtKB-UniPathway"/>
</dbReference>
<dbReference type="GO" id="GO:0008295">
    <property type="term" value="P:spermidine biosynthetic process"/>
    <property type="evidence" value="ECO:0007669"/>
    <property type="project" value="UniProtKB-KW"/>
</dbReference>
<dbReference type="CDD" id="cd06830">
    <property type="entry name" value="PLPDE_III_ADC"/>
    <property type="match status" value="1"/>
</dbReference>
<dbReference type="FunFam" id="1.20.58.930:FF:000003">
    <property type="entry name" value="Arginine decarboxylase"/>
    <property type="match status" value="1"/>
</dbReference>
<dbReference type="FunFam" id="3.20.20.10:FF:000001">
    <property type="entry name" value="Biosynthetic arginine decarboxylase"/>
    <property type="match status" value="1"/>
</dbReference>
<dbReference type="Gene3D" id="1.20.58.930">
    <property type="match status" value="1"/>
</dbReference>
<dbReference type="Gene3D" id="3.20.20.10">
    <property type="entry name" value="Alanine racemase"/>
    <property type="match status" value="1"/>
</dbReference>
<dbReference type="Gene3D" id="2.40.37.10">
    <property type="entry name" value="Lyase, Ornithine Decarboxylase, Chain A, domain 1"/>
    <property type="match status" value="1"/>
</dbReference>
<dbReference type="InterPro" id="IPR009006">
    <property type="entry name" value="Ala_racemase/Decarboxylase_C"/>
</dbReference>
<dbReference type="InterPro" id="IPR002985">
    <property type="entry name" value="Arg_decrbxlase"/>
</dbReference>
<dbReference type="InterPro" id="IPR022657">
    <property type="entry name" value="De-COase2_CS"/>
</dbReference>
<dbReference type="InterPro" id="IPR022644">
    <property type="entry name" value="De-COase2_N"/>
</dbReference>
<dbReference type="InterPro" id="IPR022653">
    <property type="entry name" value="De-COase2_pyr-phos_BS"/>
</dbReference>
<dbReference type="InterPro" id="IPR000183">
    <property type="entry name" value="Orn/DAP/Arg_de-COase"/>
</dbReference>
<dbReference type="InterPro" id="IPR029066">
    <property type="entry name" value="PLP-binding_barrel"/>
</dbReference>
<dbReference type="NCBIfam" id="NF003763">
    <property type="entry name" value="PRK05354.1"/>
    <property type="match status" value="1"/>
</dbReference>
<dbReference type="NCBIfam" id="TIGR01273">
    <property type="entry name" value="speA"/>
    <property type="match status" value="1"/>
</dbReference>
<dbReference type="PANTHER" id="PTHR43295">
    <property type="entry name" value="ARGININE DECARBOXYLASE"/>
    <property type="match status" value="1"/>
</dbReference>
<dbReference type="PANTHER" id="PTHR43295:SF1">
    <property type="entry name" value="ARGININE DECARBOXYLASE 1, CHLOROPLASTIC-RELATED"/>
    <property type="match status" value="1"/>
</dbReference>
<dbReference type="Pfam" id="PF02784">
    <property type="entry name" value="Orn_Arg_deC_N"/>
    <property type="match status" value="1"/>
</dbReference>
<dbReference type="PIRSF" id="PIRSF001336">
    <property type="entry name" value="Arg_decrbxlase"/>
    <property type="match status" value="1"/>
</dbReference>
<dbReference type="PRINTS" id="PR01180">
    <property type="entry name" value="ARGDCRBXLASE"/>
</dbReference>
<dbReference type="PRINTS" id="PR01179">
    <property type="entry name" value="ODADCRBXLASE"/>
</dbReference>
<dbReference type="SUPFAM" id="SSF51419">
    <property type="entry name" value="PLP-binding barrel"/>
    <property type="match status" value="1"/>
</dbReference>
<dbReference type="PROSITE" id="PS00878">
    <property type="entry name" value="ODR_DC_2_1"/>
    <property type="match status" value="1"/>
</dbReference>
<dbReference type="PROSITE" id="PS00879">
    <property type="entry name" value="ODR_DC_2_2"/>
    <property type="match status" value="1"/>
</dbReference>
<proteinExistence type="inferred from homology"/>
<comment type="function">
    <text evidence="5 7">Involved in the biosynthesis of pyridine alkaloid natural products, leading mainly to the production of anabasine, anatabine, nicotine and nornicotine, effective deterrents against herbivores with antiparasitic and pesticide properties (neurotoxins); nornicotine serves as the precursor in the synthesis of the carcinogen compound N'-nitrosonornicotine (NNN) (PubMed:32242247). Required for the biosynthesis of putrescine (By similarity). Catalyzes the first step of polyamine (PA) biosynthesis to produce putrescine from arginine (By similarity).</text>
</comment>
<comment type="catalytic activity">
    <reaction evidence="5">
        <text>L-arginine + H(+) = agmatine + CO2</text>
        <dbReference type="Rhea" id="RHEA:17641"/>
        <dbReference type="ChEBI" id="CHEBI:15378"/>
        <dbReference type="ChEBI" id="CHEBI:16526"/>
        <dbReference type="ChEBI" id="CHEBI:32682"/>
        <dbReference type="ChEBI" id="CHEBI:58145"/>
        <dbReference type="EC" id="4.1.1.19"/>
    </reaction>
</comment>
<comment type="cofactor">
    <cofactor evidence="4">
        <name>Mg(2+)</name>
        <dbReference type="ChEBI" id="CHEBI:18420"/>
    </cofactor>
</comment>
<comment type="cofactor">
    <cofactor evidence="3">
        <name>pyridoxal 5'-phosphate</name>
        <dbReference type="ChEBI" id="CHEBI:597326"/>
    </cofactor>
</comment>
<comment type="pathway">
    <text evidence="7">Alkaloid biosynthesis; nicotine biosynthesis.</text>
</comment>
<comment type="pathway">
    <text evidence="5">Amine and polyamine biosynthesis; agmatine biosynthesis; agmatine from L-arginine: step 1/1.</text>
</comment>
<comment type="subcellular location">
    <subcellularLocation>
        <location evidence="6">Plastid</location>
        <location evidence="6">Chloroplast</location>
    </subcellularLocation>
</comment>
<comment type="disruption phenotype">
    <text evidence="7">Reduced alkaloids and nicotin levels associated with a lower putrescine production (PubMed:32242247). Occasionally, an early senescence and a lower viability of the older leaves is observed (PubMed:32242247).</text>
</comment>
<comment type="similarity">
    <text evidence="9">Belongs to the Orn/Lys/Arg decarboxylase class-II family. SpeA subfamily.</text>
</comment>
<keyword id="KW-0017">Alkaloid metabolism</keyword>
<keyword id="KW-0150">Chloroplast</keyword>
<keyword id="KW-0210">Decarboxylase</keyword>
<keyword id="KW-0456">Lyase</keyword>
<keyword id="KW-0460">Magnesium</keyword>
<keyword id="KW-0934">Plastid</keyword>
<keyword id="KW-0663">Pyridoxal phosphate</keyword>
<keyword id="KW-1185">Reference proteome</keyword>
<keyword id="KW-0745">Spermidine biosynthesis</keyword>
<keyword id="KW-0809">Transit peptide</keyword>
<sequence>MPALGCCVDAAVSPPPGYSFLWDSSLPAPEIFPSGVPLSTNTAATTTTTTHWSPAHSSALYSIDGWGAPYFTVNSSGDISVKPHGTETLPHQEIDLLKVVKKASDPKNSGGLGLQFPLVVRFPDILKNRLESLQSAFDYAVQSQGYEAHYQGVYPVKCNQDRFVVEDIVKFGSGFRFGLEAGSKPELLLAMSCLCKGSREGLLVCNGFKDADYISLALVARKLMLNTVIVLEQEEELDLVIDISRKMAVRPLIGLRAKLRTKHSGHFGSTSGEKGKFGLTTTQIVRVVKKLEESGMLDCLQLLHFHIGSQIPSTALLADGVGEAAQIYCELVRLGAGMKYIDCGGGLGIDYDGTKSCDSDCSVGYGLQEYASTVVQAVRFVCDRKNVKHPVICSESGRAIVSHHSVLIFEAVSSTTTRSQELSSVDLQSFVEKLNDDARADYRNLSAAAIRGEYDTCVLYADQLKQRCVEQFKDGNLDIEQLAAVDGICDFVSKAIGASDPVRTYHVNLSIFTSIPDFWAIDQLFPIVPIHKLDERPGVRGILSDLTCDSDGKIDKFIGGESSLPLHELGSNGGGDGGKYYLGMFLGGAYEEALGGLHNLFGGPSVLRVSQSDSPHSFAVTCAVPGPSCADVLRAMQHEPELMFETLKHRAEEFVHNDDEQEEDKGLAFASLASSLAQSFNNMPYLVTNSSCCLTATNNGGYYYCNDENIVGVGAESAAAEEELWPYCVA</sequence>
<organism>
    <name type="scientific">Nicotiana tabacum</name>
    <name type="common">Common tobacco</name>
    <dbReference type="NCBI Taxonomy" id="4097"/>
    <lineage>
        <taxon>Eukaryota</taxon>
        <taxon>Viridiplantae</taxon>
        <taxon>Streptophyta</taxon>
        <taxon>Embryophyta</taxon>
        <taxon>Tracheophyta</taxon>
        <taxon>Spermatophyta</taxon>
        <taxon>Magnoliopsida</taxon>
        <taxon>eudicotyledons</taxon>
        <taxon>Gunneridae</taxon>
        <taxon>Pentapetalae</taxon>
        <taxon>asterids</taxon>
        <taxon>lamiids</taxon>
        <taxon>Solanales</taxon>
        <taxon>Solanaceae</taxon>
        <taxon>Nicotianoideae</taxon>
        <taxon>Nicotianeae</taxon>
        <taxon>Nicotiana</taxon>
    </lineage>
</organism>
<accession>A0A1S3WYR7</accession>
<gene>
    <name evidence="8" type="primary">ADC1B</name>
    <name evidence="10" type="ORF">LOC107759371</name>
</gene>
<name>ADC1B_TOBAC</name>
<evidence type="ECO:0000250" key="1">
    <source>
        <dbReference type="UniProtKB" id="P00860"/>
    </source>
</evidence>
<evidence type="ECO:0000250" key="2">
    <source>
        <dbReference type="UniProtKB" id="P07805"/>
    </source>
</evidence>
<evidence type="ECO:0000250" key="3">
    <source>
        <dbReference type="UniProtKB" id="P11926"/>
    </source>
</evidence>
<evidence type="ECO:0000250" key="4">
    <source>
        <dbReference type="UniProtKB" id="P21170"/>
    </source>
</evidence>
<evidence type="ECO:0000250" key="5">
    <source>
        <dbReference type="UniProtKB" id="Q9SI64"/>
    </source>
</evidence>
<evidence type="ECO:0000255" key="6"/>
<evidence type="ECO:0000269" key="7">
    <source>
    </source>
</evidence>
<evidence type="ECO:0000303" key="8">
    <source>
    </source>
</evidence>
<evidence type="ECO:0000305" key="9"/>
<evidence type="ECO:0000312" key="10">
    <source>
        <dbReference type="RefSeq" id="XP_016432787.1"/>
    </source>
</evidence>
<feature type="transit peptide" description="Chloroplast" evidence="6">
    <location>
        <begin position="1"/>
        <end position="37"/>
    </location>
</feature>
<feature type="chain" id="PRO_0000455780" description="Arginine decarboxylase 1B, chloroplastic">
    <location>
        <begin position="38"/>
        <end position="730"/>
    </location>
</feature>
<feature type="active site" description="Proton donor; shared with dimeric partner" evidence="3">
    <location>
        <position position="548"/>
    </location>
</feature>
<feature type="binding site" evidence="3">
    <location>
        <position position="309"/>
    </location>
    <ligand>
        <name>pyridoxal 5'-phosphate</name>
        <dbReference type="ChEBI" id="CHEBI:597326"/>
    </ligand>
</feature>
<feature type="binding site" evidence="3">
    <location>
        <position position="346"/>
    </location>
    <ligand>
        <name>pyridoxal 5'-phosphate</name>
        <dbReference type="ChEBI" id="CHEBI:597326"/>
    </ligand>
</feature>
<feature type="binding site" evidence="3">
    <location>
        <begin position="395"/>
        <end position="398"/>
    </location>
    <ligand>
        <name>pyridoxal 5'-phosphate</name>
        <dbReference type="ChEBI" id="CHEBI:597326"/>
    </ligand>
</feature>
<feature type="binding site" description="in other chain" evidence="2">
    <location>
        <begin position="460"/>
        <end position="461"/>
    </location>
    <ligand>
        <name>substrate</name>
        <note>ligand shared between dimeric partners</note>
    </ligand>
</feature>
<feature type="binding site" evidence="2">
    <location>
        <position position="549"/>
    </location>
    <ligand>
        <name>substrate</name>
        <note>ligand shared between dimeric partners</note>
    </ligand>
</feature>
<feature type="binding site" evidence="3">
    <location>
        <position position="590"/>
    </location>
    <ligand>
        <name>pyridoxal 5'-phosphate</name>
        <dbReference type="ChEBI" id="CHEBI:597326"/>
    </ligand>
</feature>
<feature type="site" description="Stacks against the aromatic ring of pyridoxal phosphate and stabilizes reaction intermediates" evidence="1">
    <location>
        <position position="306"/>
    </location>
</feature>
<feature type="modified residue" description="N6-(pyridoxal phosphate)lysine" evidence="3">
    <location>
        <position position="157"/>
    </location>
</feature>